<dbReference type="EMBL" id="AE016853">
    <property type="protein sequence ID" value="AAO54790.1"/>
    <property type="molecule type" value="Genomic_DNA"/>
</dbReference>
<dbReference type="RefSeq" id="NP_791095.1">
    <property type="nucleotide sequence ID" value="NC_004578.1"/>
</dbReference>
<dbReference type="SMR" id="Q887M6"/>
<dbReference type="STRING" id="223283.PSPTO_1265"/>
<dbReference type="GeneID" id="1182901"/>
<dbReference type="KEGG" id="pst:PSPTO_1265"/>
<dbReference type="PATRIC" id="fig|223283.9.peg.1286"/>
<dbReference type="eggNOG" id="COG3081">
    <property type="taxonomic scope" value="Bacteria"/>
</dbReference>
<dbReference type="HOGENOM" id="CLU_063050_0_1_6"/>
<dbReference type="OrthoDB" id="9131762at2"/>
<dbReference type="PhylomeDB" id="Q887M6"/>
<dbReference type="Proteomes" id="UP000002515">
    <property type="component" value="Chromosome"/>
</dbReference>
<dbReference type="GO" id="GO:0043590">
    <property type="term" value="C:bacterial nucleoid"/>
    <property type="evidence" value="ECO:0007669"/>
    <property type="project" value="TreeGrafter"/>
</dbReference>
<dbReference type="GO" id="GO:0005737">
    <property type="term" value="C:cytoplasm"/>
    <property type="evidence" value="ECO:0007669"/>
    <property type="project" value="UniProtKB-UniRule"/>
</dbReference>
<dbReference type="GO" id="GO:0003690">
    <property type="term" value="F:double-stranded DNA binding"/>
    <property type="evidence" value="ECO:0007669"/>
    <property type="project" value="TreeGrafter"/>
</dbReference>
<dbReference type="GO" id="GO:0003727">
    <property type="term" value="F:single-stranded RNA binding"/>
    <property type="evidence" value="ECO:0007669"/>
    <property type="project" value="TreeGrafter"/>
</dbReference>
<dbReference type="HAMAP" id="MF_00730">
    <property type="entry name" value="NdpA"/>
    <property type="match status" value="1"/>
</dbReference>
<dbReference type="InterPro" id="IPR007358">
    <property type="entry name" value="Nucleoid_associated_NdpA"/>
</dbReference>
<dbReference type="NCBIfam" id="NF001557">
    <property type="entry name" value="PRK00378.1"/>
    <property type="match status" value="1"/>
</dbReference>
<dbReference type="PANTHER" id="PTHR38772">
    <property type="match status" value="1"/>
</dbReference>
<dbReference type="PANTHER" id="PTHR38772:SF1">
    <property type="entry name" value="NUCLEOID-ASSOCIATED PROTEIN YEJK"/>
    <property type="match status" value="1"/>
</dbReference>
<dbReference type="Pfam" id="PF04245">
    <property type="entry name" value="NA37"/>
    <property type="match status" value="1"/>
</dbReference>
<accession>Q887M6</accession>
<gene>
    <name type="ordered locus">PSPTO_1265</name>
</gene>
<evidence type="ECO:0000255" key="1">
    <source>
        <dbReference type="HAMAP-Rule" id="MF_00730"/>
    </source>
</evidence>
<organism>
    <name type="scientific">Pseudomonas syringae pv. tomato (strain ATCC BAA-871 / DC3000)</name>
    <dbReference type="NCBI Taxonomy" id="223283"/>
    <lineage>
        <taxon>Bacteria</taxon>
        <taxon>Pseudomonadati</taxon>
        <taxon>Pseudomonadota</taxon>
        <taxon>Gammaproteobacteria</taxon>
        <taxon>Pseudomonadales</taxon>
        <taxon>Pseudomonadaceae</taxon>
        <taxon>Pseudomonas</taxon>
    </lineage>
</organism>
<keyword id="KW-0963">Cytoplasm</keyword>
<keyword id="KW-1185">Reference proteome</keyword>
<comment type="subcellular location">
    <subcellularLocation>
        <location evidence="1">Cytoplasm</location>
        <location evidence="1">Nucleoid</location>
    </subcellularLocation>
</comment>
<comment type="similarity">
    <text evidence="1">Belongs to the YejK family.</text>
</comment>
<proteinExistence type="inferred from homology"/>
<sequence>MPIRHCIVHLIEKKPDGTPAVLHARDSELAESQAIENMLADLNESYNAKQGKAWGLFHPESGAHPFSGWLKEYLDGGKDFTAFSRVSVEHLQKLMEESNLSVGGHVLFAHYQQGMTDYLAIALLHHSDGVAVNAELDVTPSRHLDLGQLHLAARINISEWQNNKQSKQYISFIKGKNGKKVSEYFRDFIGCQEGVDGPGETRTLLKAFSDFVESEDLPEESAREKTKTLIDYASSQSKMGEPMGLEALSELIDENQPRAFYDHIRNKDYGLSPEIPADKRTLNQFRRFTGRAEGLSISFEAHLLGDKIEYDETAGTLIIKGLPTQLTDQLKRR</sequence>
<feature type="chain" id="PRO_0000210916" description="Nucleoid-associated protein PSPTO_1265">
    <location>
        <begin position="1"/>
        <end position="333"/>
    </location>
</feature>
<protein>
    <recommendedName>
        <fullName evidence="1">Nucleoid-associated protein PSPTO_1265</fullName>
    </recommendedName>
</protein>
<name>NDPA_PSESM</name>
<reference key="1">
    <citation type="journal article" date="2003" name="Proc. Natl. Acad. Sci. U.S.A.">
        <title>The complete genome sequence of the Arabidopsis and tomato pathogen Pseudomonas syringae pv. tomato DC3000.</title>
        <authorList>
            <person name="Buell C.R."/>
            <person name="Joardar V."/>
            <person name="Lindeberg M."/>
            <person name="Selengut J."/>
            <person name="Paulsen I.T."/>
            <person name="Gwinn M.L."/>
            <person name="Dodson R.J."/>
            <person name="DeBoy R.T."/>
            <person name="Durkin A.S."/>
            <person name="Kolonay J.F."/>
            <person name="Madupu R."/>
            <person name="Daugherty S.C."/>
            <person name="Brinkac L.M."/>
            <person name="Beanan M.J."/>
            <person name="Haft D.H."/>
            <person name="Nelson W.C."/>
            <person name="Davidsen T.M."/>
            <person name="Zafar N."/>
            <person name="Zhou L."/>
            <person name="Liu J."/>
            <person name="Yuan Q."/>
            <person name="Khouri H.M."/>
            <person name="Fedorova N.B."/>
            <person name="Tran B."/>
            <person name="Russell D."/>
            <person name="Berry K.J."/>
            <person name="Utterback T.R."/>
            <person name="Van Aken S.E."/>
            <person name="Feldblyum T.V."/>
            <person name="D'Ascenzo M."/>
            <person name="Deng W.-L."/>
            <person name="Ramos A.R."/>
            <person name="Alfano J.R."/>
            <person name="Cartinhour S."/>
            <person name="Chatterjee A.K."/>
            <person name="Delaney T.P."/>
            <person name="Lazarowitz S.G."/>
            <person name="Martin G.B."/>
            <person name="Schneider D.J."/>
            <person name="Tang X."/>
            <person name="Bender C.L."/>
            <person name="White O."/>
            <person name="Fraser C.M."/>
            <person name="Collmer A."/>
        </authorList>
    </citation>
    <scope>NUCLEOTIDE SEQUENCE [LARGE SCALE GENOMIC DNA]</scope>
    <source>
        <strain>ATCC BAA-871 / DC3000</strain>
    </source>
</reference>